<proteinExistence type="evidence at protein level"/>
<keyword id="KW-1185">Reference proteome</keyword>
<accession>P31811</accession>
<sequence>MAASFSVTRRFFDDKNYPRGFSRHGDYTIKESQVLEQYGQAFKALDLGEREPATKEEKDFVAFCRGERAAETFFEKTWNKYRTRINTKKRVYTLSSDVSEAASGGEDYSGE</sequence>
<evidence type="ECO:0000250" key="1">
    <source>
        <dbReference type="UniProtKB" id="P0ADN2"/>
    </source>
</evidence>
<evidence type="ECO:0000269" key="2">
    <source>
    </source>
</evidence>
<evidence type="ECO:0000303" key="3">
    <source>
    </source>
</evidence>
<evidence type="ECO:0000305" key="4"/>
<protein>
    <recommendedName>
        <fullName evidence="1">Macrodomain Ori protein</fullName>
    </recommendedName>
    <alternativeName>
        <fullName evidence="3">ORF3</fullName>
    </alternativeName>
</protein>
<organism>
    <name type="scientific">Haemophilus influenzae (strain ATCC 51907 / DSM 11121 / KW20 / Rd)</name>
    <dbReference type="NCBI Taxonomy" id="71421"/>
    <lineage>
        <taxon>Bacteria</taxon>
        <taxon>Pseudomonadati</taxon>
        <taxon>Pseudomonadota</taxon>
        <taxon>Gammaproteobacteria</taxon>
        <taxon>Pasteurellales</taxon>
        <taxon>Pasteurellaceae</taxon>
        <taxon>Haemophilus</taxon>
    </lineage>
</organism>
<comment type="function">
    <text evidence="1">Involved in the organization of the Ori region of the chromosome into a macrodomain (MD) (By similarity). It constrains DNA mobility in the Ori macrodomain and limits long-distance DNA interactions with other chromosomal regions (By similarity).</text>
</comment>
<comment type="disruption phenotype">
    <text evidence="2">Disruption of the gene causes a slight decrease in transformation efficiency.</text>
</comment>
<comment type="similarity">
    <text evidence="4">Belongs to the MaoP family.</text>
</comment>
<feature type="chain" id="PRO_0000169645" description="Macrodomain Ori protein">
    <location>
        <begin position="1"/>
        <end position="111"/>
    </location>
</feature>
<feature type="sequence conflict" description="In Ref. 1; AAA24957." evidence="4" ref="1">
    <original>SGE</original>
    <variation>PANKIR</variation>
    <location>
        <begin position="109"/>
        <end position="111"/>
    </location>
</feature>
<gene>
    <name evidence="1" type="primary">maoP</name>
    <name type="ordered locus">HI_0847</name>
</gene>
<reference key="1">
    <citation type="journal article" date="1992" name="Proc. Natl. Acad. Sci. U.S.A.">
        <title>A periplasmic protein disulfide oxidoreductase is required for transformation of Haemophilus influenzae Rd.</title>
        <authorList>
            <person name="Tomb J.-F."/>
        </authorList>
    </citation>
    <scope>NUCLEOTIDE SEQUENCE [GENOMIC DNA]</scope>
    <scope>DISRUPTION PHENOTYPE</scope>
    <source>
        <strain>ATCC 51907 / DSM 11121 / KW20 / Rd</strain>
    </source>
</reference>
<reference key="2">
    <citation type="journal article" date="1995" name="Science">
        <title>Whole-genome random sequencing and assembly of Haemophilus influenzae Rd.</title>
        <authorList>
            <person name="Fleischmann R.D."/>
            <person name="Adams M.D."/>
            <person name="White O."/>
            <person name="Clayton R.A."/>
            <person name="Kirkness E.F."/>
            <person name="Kerlavage A.R."/>
            <person name="Bult C.J."/>
            <person name="Tomb J.-F."/>
            <person name="Dougherty B.A."/>
            <person name="Merrick J.M."/>
            <person name="McKenney K."/>
            <person name="Sutton G.G."/>
            <person name="FitzHugh W."/>
            <person name="Fields C.A."/>
            <person name="Gocayne J.D."/>
            <person name="Scott J.D."/>
            <person name="Shirley R."/>
            <person name="Liu L.-I."/>
            <person name="Glodek A."/>
            <person name="Kelley J.M."/>
            <person name="Weidman J.F."/>
            <person name="Phillips C.A."/>
            <person name="Spriggs T."/>
            <person name="Hedblom E."/>
            <person name="Cotton M.D."/>
            <person name="Utterback T.R."/>
            <person name="Hanna M.C."/>
            <person name="Nguyen D.T."/>
            <person name="Saudek D.M."/>
            <person name="Brandon R.C."/>
            <person name="Fine L.D."/>
            <person name="Fritchman J.L."/>
            <person name="Fuhrmann J.L."/>
            <person name="Geoghagen N.S.M."/>
            <person name="Gnehm C.L."/>
            <person name="McDonald L.A."/>
            <person name="Small K.V."/>
            <person name="Fraser C.M."/>
            <person name="Smith H.O."/>
            <person name="Venter J.C."/>
        </authorList>
    </citation>
    <scope>NUCLEOTIDE SEQUENCE [LARGE SCALE GENOMIC DNA]</scope>
    <source>
        <strain>ATCC 51907 / DSM 11121 / KW20 / Rd</strain>
    </source>
</reference>
<reference key="3">
    <citation type="journal article" date="2000" name="Electrophoresis">
        <title>Two-dimensional map of the proteome of Haemophilus influenzae.</title>
        <authorList>
            <person name="Langen H."/>
            <person name="Takacs B."/>
            <person name="Evers S."/>
            <person name="Berndt P."/>
            <person name="Lahm H.W."/>
            <person name="Wipf B."/>
            <person name="Gray C."/>
            <person name="Fountoulakis M."/>
        </authorList>
    </citation>
    <scope>IDENTIFICATION BY MASS SPECTROMETRY</scope>
    <source>
        <strain>ATCC 51907 / DSM 11121 / KW20 / Rd</strain>
    </source>
</reference>
<dbReference type="EMBL" id="M94205">
    <property type="protein sequence ID" value="AAA24957.1"/>
    <property type="molecule type" value="Genomic_DNA"/>
</dbReference>
<dbReference type="EMBL" id="L42023">
    <property type="protein sequence ID" value="AAC22504.1"/>
    <property type="molecule type" value="Genomic_DNA"/>
</dbReference>
<dbReference type="PIR" id="H64159">
    <property type="entry name" value="H64159"/>
</dbReference>
<dbReference type="RefSeq" id="NP_439007.1">
    <property type="nucleotide sequence ID" value="NC_000907.1"/>
</dbReference>
<dbReference type="SMR" id="P31811"/>
<dbReference type="STRING" id="71421.HI_0847"/>
<dbReference type="EnsemblBacteria" id="AAC22504">
    <property type="protein sequence ID" value="AAC22504"/>
    <property type="gene ID" value="HI_0847"/>
</dbReference>
<dbReference type="KEGG" id="hin:HI_0847"/>
<dbReference type="PATRIC" id="fig|71421.8.peg.888"/>
<dbReference type="eggNOG" id="COG3085">
    <property type="taxonomic scope" value="Bacteria"/>
</dbReference>
<dbReference type="HOGENOM" id="CLU_144599_2_2_6"/>
<dbReference type="OrthoDB" id="6400110at2"/>
<dbReference type="PhylomeDB" id="P31811"/>
<dbReference type="BioCyc" id="HINF71421:G1GJ1-887-MONOMER"/>
<dbReference type="Proteomes" id="UP000000579">
    <property type="component" value="Chromosome"/>
</dbReference>
<dbReference type="InterPro" id="IPR007335">
    <property type="entry name" value="DUF413"/>
</dbReference>
<dbReference type="NCBIfam" id="NF008252">
    <property type="entry name" value="PRK11027.1-2"/>
    <property type="match status" value="1"/>
</dbReference>
<dbReference type="Pfam" id="PF04219">
    <property type="entry name" value="DUF413"/>
    <property type="match status" value="1"/>
</dbReference>
<name>MAOP_HAEIN</name>